<comment type="catalytic activity">
    <reaction evidence="1">
        <text>L-citrulline + L-aspartate + ATP = 2-(N(omega)-L-arginino)succinate + AMP + diphosphate + H(+)</text>
        <dbReference type="Rhea" id="RHEA:10932"/>
        <dbReference type="ChEBI" id="CHEBI:15378"/>
        <dbReference type="ChEBI" id="CHEBI:29991"/>
        <dbReference type="ChEBI" id="CHEBI:30616"/>
        <dbReference type="ChEBI" id="CHEBI:33019"/>
        <dbReference type="ChEBI" id="CHEBI:57472"/>
        <dbReference type="ChEBI" id="CHEBI:57743"/>
        <dbReference type="ChEBI" id="CHEBI:456215"/>
        <dbReference type="EC" id="6.3.4.5"/>
    </reaction>
</comment>
<comment type="pathway">
    <text evidence="1">Amino-acid biosynthesis; L-arginine biosynthesis; L-arginine from L-ornithine and carbamoyl phosphate: step 2/3.</text>
</comment>
<comment type="subunit">
    <text evidence="1">Homotetramer.</text>
</comment>
<comment type="subcellular location">
    <subcellularLocation>
        <location evidence="1">Cytoplasm</location>
    </subcellularLocation>
</comment>
<comment type="similarity">
    <text evidence="1">Belongs to the argininosuccinate synthase family. Type 1 subfamily.</text>
</comment>
<accession>B1LAP4</accession>
<organism>
    <name type="scientific">Thermotoga sp. (strain RQ2)</name>
    <dbReference type="NCBI Taxonomy" id="126740"/>
    <lineage>
        <taxon>Bacteria</taxon>
        <taxon>Thermotogati</taxon>
        <taxon>Thermotogota</taxon>
        <taxon>Thermotogae</taxon>
        <taxon>Thermotogales</taxon>
        <taxon>Thermotogaceae</taxon>
        <taxon>Thermotoga</taxon>
    </lineage>
</organism>
<gene>
    <name evidence="1" type="primary">argG</name>
    <name type="ordered locus">TRQ2_1045</name>
</gene>
<name>ASSY_THESQ</name>
<protein>
    <recommendedName>
        <fullName evidence="1">Argininosuccinate synthase</fullName>
        <ecNumber evidence="1">6.3.4.5</ecNumber>
    </recommendedName>
    <alternativeName>
        <fullName evidence="1">Citrulline--aspartate ligase</fullName>
    </alternativeName>
</protein>
<proteinExistence type="inferred from homology"/>
<keyword id="KW-0028">Amino-acid biosynthesis</keyword>
<keyword id="KW-0055">Arginine biosynthesis</keyword>
<keyword id="KW-0067">ATP-binding</keyword>
<keyword id="KW-0963">Cytoplasm</keyword>
<keyword id="KW-0436">Ligase</keyword>
<keyword id="KW-0547">Nucleotide-binding</keyword>
<reference key="1">
    <citation type="journal article" date="2011" name="J. Bacteriol.">
        <title>Genome sequence of Thermotoga sp. strain RQ2, a hyperthermophilic bacterium isolated from a geothermally heated region of the seafloor near Ribeira Quente, the Azores.</title>
        <authorList>
            <person name="Swithers K.S."/>
            <person name="DiPippo J.L."/>
            <person name="Bruce D.C."/>
            <person name="Detter C."/>
            <person name="Tapia R."/>
            <person name="Han S."/>
            <person name="Saunders E."/>
            <person name="Goodwin L.A."/>
            <person name="Han J."/>
            <person name="Woyke T."/>
            <person name="Pitluck S."/>
            <person name="Pennacchio L."/>
            <person name="Nolan M."/>
            <person name="Mikhailova N."/>
            <person name="Lykidis A."/>
            <person name="Land M.L."/>
            <person name="Brettin T."/>
            <person name="Stetter K.O."/>
            <person name="Nelson K.E."/>
            <person name="Gogarten J.P."/>
            <person name="Noll K.M."/>
        </authorList>
    </citation>
    <scope>NUCLEOTIDE SEQUENCE [LARGE SCALE GENOMIC DNA]</scope>
    <source>
        <strain>RQ2</strain>
    </source>
</reference>
<dbReference type="EC" id="6.3.4.5" evidence="1"/>
<dbReference type="EMBL" id="CP000969">
    <property type="protein sequence ID" value="ACB09392.1"/>
    <property type="molecule type" value="Genomic_DNA"/>
</dbReference>
<dbReference type="RefSeq" id="WP_012310904.1">
    <property type="nucleotide sequence ID" value="NC_010483.1"/>
</dbReference>
<dbReference type="SMR" id="B1LAP4"/>
<dbReference type="KEGG" id="trq:TRQ2_1045"/>
<dbReference type="HOGENOM" id="CLU_032784_4_2_0"/>
<dbReference type="UniPathway" id="UPA00068">
    <property type="reaction ID" value="UER00113"/>
</dbReference>
<dbReference type="Proteomes" id="UP000001687">
    <property type="component" value="Chromosome"/>
</dbReference>
<dbReference type="GO" id="GO:0005737">
    <property type="term" value="C:cytoplasm"/>
    <property type="evidence" value="ECO:0007669"/>
    <property type="project" value="UniProtKB-SubCell"/>
</dbReference>
<dbReference type="GO" id="GO:0004055">
    <property type="term" value="F:argininosuccinate synthase activity"/>
    <property type="evidence" value="ECO:0007669"/>
    <property type="project" value="UniProtKB-UniRule"/>
</dbReference>
<dbReference type="GO" id="GO:0005524">
    <property type="term" value="F:ATP binding"/>
    <property type="evidence" value="ECO:0007669"/>
    <property type="project" value="UniProtKB-UniRule"/>
</dbReference>
<dbReference type="GO" id="GO:0000053">
    <property type="term" value="P:argininosuccinate metabolic process"/>
    <property type="evidence" value="ECO:0007669"/>
    <property type="project" value="TreeGrafter"/>
</dbReference>
<dbReference type="GO" id="GO:0006526">
    <property type="term" value="P:L-arginine biosynthetic process"/>
    <property type="evidence" value="ECO:0007669"/>
    <property type="project" value="UniProtKB-UniRule"/>
</dbReference>
<dbReference type="GO" id="GO:0000050">
    <property type="term" value="P:urea cycle"/>
    <property type="evidence" value="ECO:0007669"/>
    <property type="project" value="TreeGrafter"/>
</dbReference>
<dbReference type="CDD" id="cd01999">
    <property type="entry name" value="ASS"/>
    <property type="match status" value="1"/>
</dbReference>
<dbReference type="FunFam" id="3.40.50.620:FF:000019">
    <property type="entry name" value="Argininosuccinate synthase"/>
    <property type="match status" value="1"/>
</dbReference>
<dbReference type="FunFam" id="3.90.1260.10:FF:000007">
    <property type="entry name" value="Argininosuccinate synthase"/>
    <property type="match status" value="1"/>
</dbReference>
<dbReference type="Gene3D" id="3.90.1260.10">
    <property type="entry name" value="Argininosuccinate synthetase, chain A, domain 2"/>
    <property type="match status" value="1"/>
</dbReference>
<dbReference type="Gene3D" id="3.40.50.620">
    <property type="entry name" value="HUPs"/>
    <property type="match status" value="1"/>
</dbReference>
<dbReference type="Gene3D" id="1.20.5.470">
    <property type="entry name" value="Single helix bin"/>
    <property type="match status" value="1"/>
</dbReference>
<dbReference type="HAMAP" id="MF_00005">
    <property type="entry name" value="Arg_succ_synth_type1"/>
    <property type="match status" value="1"/>
</dbReference>
<dbReference type="InterPro" id="IPR048268">
    <property type="entry name" value="Arginosuc_syn_C"/>
</dbReference>
<dbReference type="InterPro" id="IPR048267">
    <property type="entry name" value="Arginosuc_syn_N"/>
</dbReference>
<dbReference type="InterPro" id="IPR001518">
    <property type="entry name" value="Arginosuc_synth"/>
</dbReference>
<dbReference type="InterPro" id="IPR018223">
    <property type="entry name" value="Arginosuc_synth_CS"/>
</dbReference>
<dbReference type="InterPro" id="IPR023434">
    <property type="entry name" value="Arginosuc_synth_type_1_subfam"/>
</dbReference>
<dbReference type="InterPro" id="IPR024074">
    <property type="entry name" value="AS_cat/multimer_dom_body"/>
</dbReference>
<dbReference type="InterPro" id="IPR014729">
    <property type="entry name" value="Rossmann-like_a/b/a_fold"/>
</dbReference>
<dbReference type="NCBIfam" id="TIGR00032">
    <property type="entry name" value="argG"/>
    <property type="match status" value="1"/>
</dbReference>
<dbReference type="NCBIfam" id="NF001770">
    <property type="entry name" value="PRK00509.1"/>
    <property type="match status" value="1"/>
</dbReference>
<dbReference type="PANTHER" id="PTHR11587">
    <property type="entry name" value="ARGININOSUCCINATE SYNTHASE"/>
    <property type="match status" value="1"/>
</dbReference>
<dbReference type="PANTHER" id="PTHR11587:SF2">
    <property type="entry name" value="ARGININOSUCCINATE SYNTHASE"/>
    <property type="match status" value="1"/>
</dbReference>
<dbReference type="Pfam" id="PF20979">
    <property type="entry name" value="Arginosuc_syn_C"/>
    <property type="match status" value="1"/>
</dbReference>
<dbReference type="Pfam" id="PF00764">
    <property type="entry name" value="Arginosuc_synth"/>
    <property type="match status" value="1"/>
</dbReference>
<dbReference type="SUPFAM" id="SSF52402">
    <property type="entry name" value="Adenine nucleotide alpha hydrolases-like"/>
    <property type="match status" value="1"/>
</dbReference>
<dbReference type="SUPFAM" id="SSF69864">
    <property type="entry name" value="Argininosuccinate synthetase, C-terminal domain"/>
    <property type="match status" value="1"/>
</dbReference>
<dbReference type="PROSITE" id="PS00564">
    <property type="entry name" value="ARGININOSUCCIN_SYN_1"/>
    <property type="match status" value="1"/>
</dbReference>
<dbReference type="PROSITE" id="PS00565">
    <property type="entry name" value="ARGININOSUCCIN_SYN_2"/>
    <property type="match status" value="1"/>
</dbReference>
<feature type="chain" id="PRO_1000089059" description="Argininosuccinate synthase">
    <location>
        <begin position="1"/>
        <end position="409"/>
    </location>
</feature>
<feature type="binding site" evidence="1">
    <location>
        <begin position="8"/>
        <end position="16"/>
    </location>
    <ligand>
        <name>ATP</name>
        <dbReference type="ChEBI" id="CHEBI:30616"/>
    </ligand>
</feature>
<feature type="binding site" evidence="1">
    <location>
        <position position="34"/>
    </location>
    <ligand>
        <name>ATP</name>
        <dbReference type="ChEBI" id="CHEBI:30616"/>
    </ligand>
</feature>
<feature type="binding site" evidence="1">
    <location>
        <position position="85"/>
    </location>
    <ligand>
        <name>L-citrulline</name>
        <dbReference type="ChEBI" id="CHEBI:57743"/>
    </ligand>
</feature>
<feature type="binding site" evidence="1">
    <location>
        <position position="115"/>
    </location>
    <ligand>
        <name>ATP</name>
        <dbReference type="ChEBI" id="CHEBI:30616"/>
    </ligand>
</feature>
<feature type="binding site" evidence="1">
    <location>
        <position position="117"/>
    </location>
    <ligand>
        <name>L-aspartate</name>
        <dbReference type="ChEBI" id="CHEBI:29991"/>
    </ligand>
</feature>
<feature type="binding site" evidence="1">
    <location>
        <position position="121"/>
    </location>
    <ligand>
        <name>L-aspartate</name>
        <dbReference type="ChEBI" id="CHEBI:29991"/>
    </ligand>
</feature>
<feature type="binding site" evidence="1">
    <location>
        <position position="121"/>
    </location>
    <ligand>
        <name>L-citrulline</name>
        <dbReference type="ChEBI" id="CHEBI:57743"/>
    </ligand>
</feature>
<feature type="binding site" evidence="1">
    <location>
        <position position="122"/>
    </location>
    <ligand>
        <name>L-aspartate</name>
        <dbReference type="ChEBI" id="CHEBI:29991"/>
    </ligand>
</feature>
<feature type="binding site" evidence="1">
    <location>
        <position position="125"/>
    </location>
    <ligand>
        <name>L-citrulline</name>
        <dbReference type="ChEBI" id="CHEBI:57743"/>
    </ligand>
</feature>
<feature type="binding site" evidence="1">
    <location>
        <position position="178"/>
    </location>
    <ligand>
        <name>L-citrulline</name>
        <dbReference type="ChEBI" id="CHEBI:57743"/>
    </ligand>
</feature>
<feature type="binding site" evidence="1">
    <location>
        <position position="187"/>
    </location>
    <ligand>
        <name>L-citrulline</name>
        <dbReference type="ChEBI" id="CHEBI:57743"/>
    </ligand>
</feature>
<feature type="binding site" evidence="1">
    <location>
        <position position="268"/>
    </location>
    <ligand>
        <name>L-citrulline</name>
        <dbReference type="ChEBI" id="CHEBI:57743"/>
    </ligand>
</feature>
<feature type="binding site" evidence="1">
    <location>
        <position position="280"/>
    </location>
    <ligand>
        <name>L-citrulline</name>
        <dbReference type="ChEBI" id="CHEBI:57743"/>
    </ligand>
</feature>
<sequence>MKEKVVLAYSGGLDTSVILKWLCEKGFDVIAYVANVGQKDDFDAIKEKALKTGASKVYVEDLRREFVTDYIFTALLGNAMYEGRYLLGTAIARPLIAKRQVEIAEKEGAQYVAHGATGKGNDQVRFELTYAALNPNLKVISPWKDPEFLAKFKGRTDLINYAMEKGIPIKVSKKRPYSEDENLMHISHEAGKLEDPAYIPDEDVFTWTVSPKDAPDEETLLEIHFENGIPVKVVNLKDGTEKTDPLELFEYLNEVGAKNGVGRLDMVENRFIGIKSRGVYETPGATILWTAHRDLEGITMDKEVMHLRDMLAPKFAELIYNGFWFSPEMEFLLAAFRKAQENVTGKVTVSIYKGNVMPVARYSPYSLYNPELSSMDVEGGFNATDSKGFINIHALRLKVHQLVKKGYQK</sequence>
<evidence type="ECO:0000255" key="1">
    <source>
        <dbReference type="HAMAP-Rule" id="MF_00005"/>
    </source>
</evidence>